<comment type="function">
    <text evidence="1">Endonuclease that specifically degrades the RNA of RNA-DNA hybrids.</text>
</comment>
<comment type="catalytic activity">
    <reaction evidence="1">
        <text>Endonucleolytic cleavage to 5'-phosphomonoester.</text>
        <dbReference type="EC" id="3.1.26.4"/>
    </reaction>
</comment>
<comment type="cofactor">
    <cofactor evidence="1">
        <name>Mn(2+)</name>
        <dbReference type="ChEBI" id="CHEBI:29035"/>
    </cofactor>
    <cofactor evidence="1">
        <name>Mg(2+)</name>
        <dbReference type="ChEBI" id="CHEBI:18420"/>
    </cofactor>
    <text evidence="1">Manganese or magnesium. Binds 1 divalent metal ion per monomer in the absence of substrate. May bind a second metal ion after substrate binding.</text>
</comment>
<comment type="subcellular location">
    <subcellularLocation>
        <location evidence="1">Cytoplasm</location>
    </subcellularLocation>
</comment>
<comment type="similarity">
    <text evidence="1">Belongs to the RNase HII family.</text>
</comment>
<accession>Q38WY6</accession>
<reference key="1">
    <citation type="journal article" date="2005" name="Nat. Biotechnol.">
        <title>The complete genome sequence of the meat-borne lactic acid bacterium Lactobacillus sakei 23K.</title>
        <authorList>
            <person name="Chaillou S."/>
            <person name="Champomier-Verges M.-C."/>
            <person name="Cornet M."/>
            <person name="Crutz-Le Coq A.-M."/>
            <person name="Dudez A.-M."/>
            <person name="Martin V."/>
            <person name="Beaufils S."/>
            <person name="Darbon-Rongere E."/>
            <person name="Bossy R."/>
            <person name="Loux V."/>
            <person name="Zagorec M."/>
        </authorList>
    </citation>
    <scope>NUCLEOTIDE SEQUENCE [LARGE SCALE GENOMIC DNA]</scope>
    <source>
        <strain>23K</strain>
    </source>
</reference>
<feature type="chain" id="PRO_0000235732" description="Ribonuclease HII">
    <location>
        <begin position="1"/>
        <end position="253"/>
    </location>
</feature>
<feature type="domain" description="RNase H type-2" evidence="2">
    <location>
        <begin position="70"/>
        <end position="253"/>
    </location>
</feature>
<feature type="binding site" evidence="1">
    <location>
        <position position="76"/>
    </location>
    <ligand>
        <name>a divalent metal cation</name>
        <dbReference type="ChEBI" id="CHEBI:60240"/>
    </ligand>
</feature>
<feature type="binding site" evidence="1">
    <location>
        <position position="77"/>
    </location>
    <ligand>
        <name>a divalent metal cation</name>
        <dbReference type="ChEBI" id="CHEBI:60240"/>
    </ligand>
</feature>
<feature type="binding site" evidence="1">
    <location>
        <position position="168"/>
    </location>
    <ligand>
        <name>a divalent metal cation</name>
        <dbReference type="ChEBI" id="CHEBI:60240"/>
    </ligand>
</feature>
<name>RNH2_LATSS</name>
<protein>
    <recommendedName>
        <fullName evidence="1">Ribonuclease HII</fullName>
        <shortName evidence="1">RNase HII</shortName>
        <ecNumber evidence="1">3.1.26.4</ecNumber>
    </recommendedName>
</protein>
<gene>
    <name evidence="1" type="primary">rnhB</name>
    <name type="ordered locus">LCA_0993</name>
</gene>
<evidence type="ECO:0000255" key="1">
    <source>
        <dbReference type="HAMAP-Rule" id="MF_00052"/>
    </source>
</evidence>
<evidence type="ECO:0000255" key="2">
    <source>
        <dbReference type="PROSITE-ProRule" id="PRU01319"/>
    </source>
</evidence>
<dbReference type="EC" id="3.1.26.4" evidence="1"/>
<dbReference type="EMBL" id="CR936503">
    <property type="protein sequence ID" value="CAI55295.1"/>
    <property type="molecule type" value="Genomic_DNA"/>
</dbReference>
<dbReference type="RefSeq" id="WP_011374695.1">
    <property type="nucleotide sequence ID" value="NC_007576.1"/>
</dbReference>
<dbReference type="SMR" id="Q38WY6"/>
<dbReference type="STRING" id="314315.LCA_0993"/>
<dbReference type="KEGG" id="lsa:LCA_0993"/>
<dbReference type="eggNOG" id="COG0164">
    <property type="taxonomic scope" value="Bacteria"/>
</dbReference>
<dbReference type="HOGENOM" id="CLU_036532_2_1_9"/>
<dbReference type="OrthoDB" id="9803420at2"/>
<dbReference type="Proteomes" id="UP000002707">
    <property type="component" value="Chromosome"/>
</dbReference>
<dbReference type="GO" id="GO:0005737">
    <property type="term" value="C:cytoplasm"/>
    <property type="evidence" value="ECO:0007669"/>
    <property type="project" value="UniProtKB-SubCell"/>
</dbReference>
<dbReference type="GO" id="GO:0032299">
    <property type="term" value="C:ribonuclease H2 complex"/>
    <property type="evidence" value="ECO:0007669"/>
    <property type="project" value="TreeGrafter"/>
</dbReference>
<dbReference type="GO" id="GO:0030145">
    <property type="term" value="F:manganese ion binding"/>
    <property type="evidence" value="ECO:0007669"/>
    <property type="project" value="UniProtKB-UniRule"/>
</dbReference>
<dbReference type="GO" id="GO:0003723">
    <property type="term" value="F:RNA binding"/>
    <property type="evidence" value="ECO:0007669"/>
    <property type="project" value="InterPro"/>
</dbReference>
<dbReference type="GO" id="GO:0004523">
    <property type="term" value="F:RNA-DNA hybrid ribonuclease activity"/>
    <property type="evidence" value="ECO:0007669"/>
    <property type="project" value="UniProtKB-UniRule"/>
</dbReference>
<dbReference type="GO" id="GO:0043137">
    <property type="term" value="P:DNA replication, removal of RNA primer"/>
    <property type="evidence" value="ECO:0007669"/>
    <property type="project" value="TreeGrafter"/>
</dbReference>
<dbReference type="GO" id="GO:0006298">
    <property type="term" value="P:mismatch repair"/>
    <property type="evidence" value="ECO:0007669"/>
    <property type="project" value="TreeGrafter"/>
</dbReference>
<dbReference type="CDD" id="cd07182">
    <property type="entry name" value="RNase_HII_bacteria_HII_like"/>
    <property type="match status" value="1"/>
</dbReference>
<dbReference type="FunFam" id="3.30.420.10:FF:000006">
    <property type="entry name" value="Ribonuclease HII"/>
    <property type="match status" value="1"/>
</dbReference>
<dbReference type="Gene3D" id="3.30.420.10">
    <property type="entry name" value="Ribonuclease H-like superfamily/Ribonuclease H"/>
    <property type="match status" value="1"/>
</dbReference>
<dbReference type="HAMAP" id="MF_00052_B">
    <property type="entry name" value="RNase_HII_B"/>
    <property type="match status" value="1"/>
</dbReference>
<dbReference type="InterPro" id="IPR022898">
    <property type="entry name" value="RNase_HII"/>
</dbReference>
<dbReference type="InterPro" id="IPR001352">
    <property type="entry name" value="RNase_HII/HIII"/>
</dbReference>
<dbReference type="InterPro" id="IPR024567">
    <property type="entry name" value="RNase_HII/HIII_dom"/>
</dbReference>
<dbReference type="InterPro" id="IPR012337">
    <property type="entry name" value="RNaseH-like_sf"/>
</dbReference>
<dbReference type="InterPro" id="IPR036397">
    <property type="entry name" value="RNaseH_sf"/>
</dbReference>
<dbReference type="NCBIfam" id="NF000594">
    <property type="entry name" value="PRK00015.1-1"/>
    <property type="match status" value="1"/>
</dbReference>
<dbReference type="NCBIfam" id="NF000595">
    <property type="entry name" value="PRK00015.1-3"/>
    <property type="match status" value="1"/>
</dbReference>
<dbReference type="PANTHER" id="PTHR10954">
    <property type="entry name" value="RIBONUCLEASE H2 SUBUNIT A"/>
    <property type="match status" value="1"/>
</dbReference>
<dbReference type="PANTHER" id="PTHR10954:SF18">
    <property type="entry name" value="RIBONUCLEASE HII"/>
    <property type="match status" value="1"/>
</dbReference>
<dbReference type="Pfam" id="PF01351">
    <property type="entry name" value="RNase_HII"/>
    <property type="match status" value="1"/>
</dbReference>
<dbReference type="SUPFAM" id="SSF53098">
    <property type="entry name" value="Ribonuclease H-like"/>
    <property type="match status" value="1"/>
</dbReference>
<dbReference type="PROSITE" id="PS51975">
    <property type="entry name" value="RNASE_H_2"/>
    <property type="match status" value="1"/>
</dbReference>
<keyword id="KW-0963">Cytoplasm</keyword>
<keyword id="KW-0255">Endonuclease</keyword>
<keyword id="KW-0378">Hydrolase</keyword>
<keyword id="KW-0464">Manganese</keyword>
<keyword id="KW-0479">Metal-binding</keyword>
<keyword id="KW-0540">Nuclease</keyword>
<keyword id="KW-1185">Reference proteome</keyword>
<sequence>MTKAQSIAEIKQLLQAPVTEEQLATFAADSRAGVQKLVVQYHKRAAKLAAQKAAFEERRQTEKALWPDYPLVAGIDEVGRGPLAGPVVTAAVILPHDFDLWQVNDSKQLSFKLKQELYREIMAQAVSVSIGIASPERIDTENIYHATELAMGEAVAGLDKQPDYLLVDAMTVPTDIPQEKLIKGDARSISIASASIVAKVIRDQLMINYDQQYPGYDLANNMGYGTAKHLAGLAELGVTPIHRRSFSPVQNAL</sequence>
<organism>
    <name type="scientific">Latilactobacillus sakei subsp. sakei (strain 23K)</name>
    <name type="common">Lactobacillus sakei subsp. sakei</name>
    <dbReference type="NCBI Taxonomy" id="314315"/>
    <lineage>
        <taxon>Bacteria</taxon>
        <taxon>Bacillati</taxon>
        <taxon>Bacillota</taxon>
        <taxon>Bacilli</taxon>
        <taxon>Lactobacillales</taxon>
        <taxon>Lactobacillaceae</taxon>
        <taxon>Latilactobacillus</taxon>
    </lineage>
</organism>
<proteinExistence type="inferred from homology"/>